<feature type="chain" id="PRO_1000087128" description="Large ribosomal subunit protein uL14">
    <location>
        <begin position="1"/>
        <end position="122"/>
    </location>
</feature>
<keyword id="KW-0002">3D-structure</keyword>
<keyword id="KW-0687">Ribonucleoprotein</keyword>
<keyword id="KW-0689">Ribosomal protein</keyword>
<keyword id="KW-0694">RNA-binding</keyword>
<keyword id="KW-0699">rRNA-binding</keyword>
<name>RL14_FLAJ1</name>
<evidence type="ECO:0000255" key="1">
    <source>
        <dbReference type="HAMAP-Rule" id="MF_01367"/>
    </source>
</evidence>
<evidence type="ECO:0000305" key="2"/>
<gene>
    <name evidence="1" type="primary">rplN</name>
    <name type="ordered locus">Fjoh_0387</name>
</gene>
<reference key="1">
    <citation type="journal article" date="2009" name="Appl. Environ. Microbiol.">
        <title>Novel features of the polysaccharide-digesting gliding bacterium Flavobacterium johnsoniae as revealed by genome sequence analysis.</title>
        <authorList>
            <person name="McBride M.J."/>
            <person name="Xie G."/>
            <person name="Martens E.C."/>
            <person name="Lapidus A."/>
            <person name="Henrissat B."/>
            <person name="Rhodes R.G."/>
            <person name="Goltsman E."/>
            <person name="Wang W."/>
            <person name="Xu J."/>
            <person name="Hunnicutt D.W."/>
            <person name="Staroscik A.M."/>
            <person name="Hoover T.R."/>
            <person name="Cheng Y.Q."/>
            <person name="Stein J.L."/>
        </authorList>
    </citation>
    <scope>NUCLEOTIDE SEQUENCE [LARGE SCALE GENOMIC DNA]</scope>
    <source>
        <strain>ATCC 17061 / DSM 2064 / JCM 8514 / BCRC 14874 / CCUG 350202 / NBRC 14942 / NCIMB 11054 / UW101</strain>
    </source>
</reference>
<protein>
    <recommendedName>
        <fullName evidence="1">Large ribosomal subunit protein uL14</fullName>
    </recommendedName>
    <alternativeName>
        <fullName evidence="2">50S ribosomal protein L14</fullName>
    </alternativeName>
</protein>
<dbReference type="EMBL" id="CP000685">
    <property type="protein sequence ID" value="ABQ03423.1"/>
    <property type="molecule type" value="Genomic_DNA"/>
</dbReference>
<dbReference type="RefSeq" id="WP_007803649.1">
    <property type="nucleotide sequence ID" value="NZ_MUGZ01000005.1"/>
</dbReference>
<dbReference type="PDB" id="7JIL">
    <property type="method" value="EM"/>
    <property type="resolution" value="2.80 A"/>
    <property type="chains" value="K=1-122"/>
</dbReference>
<dbReference type="PDBsum" id="7JIL"/>
<dbReference type="EMDB" id="EMD-22345"/>
<dbReference type="SMR" id="A5FMZ0"/>
<dbReference type="STRING" id="376686.Fjoh_0387"/>
<dbReference type="KEGG" id="fjo:Fjoh_0387"/>
<dbReference type="eggNOG" id="COG0093">
    <property type="taxonomic scope" value="Bacteria"/>
</dbReference>
<dbReference type="HOGENOM" id="CLU_095071_2_1_10"/>
<dbReference type="OrthoDB" id="9806379at2"/>
<dbReference type="Proteomes" id="UP000006694">
    <property type="component" value="Chromosome"/>
</dbReference>
<dbReference type="GO" id="GO:0022625">
    <property type="term" value="C:cytosolic large ribosomal subunit"/>
    <property type="evidence" value="ECO:0007669"/>
    <property type="project" value="TreeGrafter"/>
</dbReference>
<dbReference type="GO" id="GO:0070180">
    <property type="term" value="F:large ribosomal subunit rRNA binding"/>
    <property type="evidence" value="ECO:0007669"/>
    <property type="project" value="TreeGrafter"/>
</dbReference>
<dbReference type="GO" id="GO:0003735">
    <property type="term" value="F:structural constituent of ribosome"/>
    <property type="evidence" value="ECO:0007669"/>
    <property type="project" value="InterPro"/>
</dbReference>
<dbReference type="GO" id="GO:0006412">
    <property type="term" value="P:translation"/>
    <property type="evidence" value="ECO:0007669"/>
    <property type="project" value="UniProtKB-UniRule"/>
</dbReference>
<dbReference type="CDD" id="cd00337">
    <property type="entry name" value="Ribosomal_uL14"/>
    <property type="match status" value="1"/>
</dbReference>
<dbReference type="FunFam" id="2.40.150.20:FF:000001">
    <property type="entry name" value="50S ribosomal protein L14"/>
    <property type="match status" value="1"/>
</dbReference>
<dbReference type="Gene3D" id="2.40.150.20">
    <property type="entry name" value="Ribosomal protein L14"/>
    <property type="match status" value="1"/>
</dbReference>
<dbReference type="HAMAP" id="MF_01367">
    <property type="entry name" value="Ribosomal_uL14"/>
    <property type="match status" value="1"/>
</dbReference>
<dbReference type="InterPro" id="IPR000218">
    <property type="entry name" value="Ribosomal_uL14"/>
</dbReference>
<dbReference type="InterPro" id="IPR005745">
    <property type="entry name" value="Ribosomal_uL14_bac-type"/>
</dbReference>
<dbReference type="InterPro" id="IPR019972">
    <property type="entry name" value="Ribosomal_uL14_CS"/>
</dbReference>
<dbReference type="InterPro" id="IPR036853">
    <property type="entry name" value="Ribosomal_uL14_sf"/>
</dbReference>
<dbReference type="NCBIfam" id="TIGR01067">
    <property type="entry name" value="rplN_bact"/>
    <property type="match status" value="1"/>
</dbReference>
<dbReference type="PANTHER" id="PTHR11761">
    <property type="entry name" value="50S/60S RIBOSOMAL PROTEIN L14/L23"/>
    <property type="match status" value="1"/>
</dbReference>
<dbReference type="PANTHER" id="PTHR11761:SF3">
    <property type="entry name" value="LARGE RIBOSOMAL SUBUNIT PROTEIN UL14M"/>
    <property type="match status" value="1"/>
</dbReference>
<dbReference type="Pfam" id="PF00238">
    <property type="entry name" value="Ribosomal_L14"/>
    <property type="match status" value="1"/>
</dbReference>
<dbReference type="SMART" id="SM01374">
    <property type="entry name" value="Ribosomal_L14"/>
    <property type="match status" value="1"/>
</dbReference>
<dbReference type="SUPFAM" id="SSF50193">
    <property type="entry name" value="Ribosomal protein L14"/>
    <property type="match status" value="1"/>
</dbReference>
<dbReference type="PROSITE" id="PS00049">
    <property type="entry name" value="RIBOSOMAL_L14"/>
    <property type="match status" value="1"/>
</dbReference>
<accession>A5FMZ0</accession>
<comment type="function">
    <text evidence="1">Binds to 23S rRNA. Forms part of two intersubunit bridges in the 70S ribosome.</text>
</comment>
<comment type="subunit">
    <text evidence="1">Part of the 50S ribosomal subunit. Forms a cluster with proteins L3 and L19. In the 70S ribosome, L14 and L19 interact and together make contacts with the 16S rRNA in bridges B5 and B8.</text>
</comment>
<comment type="similarity">
    <text evidence="1">Belongs to the universal ribosomal protein uL14 family.</text>
</comment>
<proteinExistence type="evidence at protein level"/>
<sequence length="122" mass="13317">MVQQESRLKVADNTGAKEVLTIRVLGGTKRRYASVGDKIVVSIKDATPNGNVKKGAVSTAVVVRTKKEVRRADGSYIRFDDNACVLLNAAGEMRGTRVFGPVARELREKQFMKIVSLAPEVL</sequence>
<organism>
    <name type="scientific">Flavobacterium johnsoniae (strain ATCC 17061 / DSM 2064 / JCM 8514 / BCRC 14874 / CCUG 350202 / NBRC 14942 / NCIMB 11054 / UW101)</name>
    <name type="common">Cytophaga johnsonae</name>
    <dbReference type="NCBI Taxonomy" id="376686"/>
    <lineage>
        <taxon>Bacteria</taxon>
        <taxon>Pseudomonadati</taxon>
        <taxon>Bacteroidota</taxon>
        <taxon>Flavobacteriia</taxon>
        <taxon>Flavobacteriales</taxon>
        <taxon>Flavobacteriaceae</taxon>
        <taxon>Flavobacterium</taxon>
    </lineage>
</organism>